<accession>P48160</accession>
<accession>Q54D95</accession>
<feature type="chain" id="PRO_0000104891" description="Large ribosomal subunit protein uL15">
    <location>
        <begin position="1"/>
        <end position="148"/>
    </location>
</feature>
<feature type="region of interest" description="Disordered" evidence="1">
    <location>
        <begin position="18"/>
        <end position="38"/>
    </location>
</feature>
<organism>
    <name type="scientific">Dictyostelium discoideum</name>
    <name type="common">Social amoeba</name>
    <dbReference type="NCBI Taxonomy" id="44689"/>
    <lineage>
        <taxon>Eukaryota</taxon>
        <taxon>Amoebozoa</taxon>
        <taxon>Evosea</taxon>
        <taxon>Eumycetozoa</taxon>
        <taxon>Dictyostelia</taxon>
        <taxon>Dictyosteliales</taxon>
        <taxon>Dictyosteliaceae</taxon>
        <taxon>Dictyostelium</taxon>
    </lineage>
</organism>
<protein>
    <recommendedName>
        <fullName evidence="2">Large ribosomal subunit protein uL15</fullName>
    </recommendedName>
    <alternativeName>
        <fullName>60S ribosomal protein L27a</fullName>
    </alternativeName>
</protein>
<evidence type="ECO:0000256" key="1">
    <source>
        <dbReference type="SAM" id="MobiDB-lite"/>
    </source>
</evidence>
<evidence type="ECO:0000305" key="2"/>
<name>RL27A_DICDI</name>
<reference key="1">
    <citation type="journal article" date="1998" name="Biosci. Biotechnol. Biochem.">
        <title>The characterization of two Dictyostelium discoideum genes encoding ribosomal proteins with sequence similarity to rat L27a and L37a.</title>
        <authorList>
            <person name="Ohmachi T."/>
            <person name="Fukuoka R."/>
            <person name="Kimura Y."/>
            <person name="Asada Y."/>
            <person name="Ennis H.L."/>
        </authorList>
    </citation>
    <scope>NUCLEOTIDE SEQUENCE [GENOMIC DNA]</scope>
    <source>
        <strain>AX3</strain>
    </source>
</reference>
<reference key="2">
    <citation type="journal article" date="2005" name="Nature">
        <title>The genome of the social amoeba Dictyostelium discoideum.</title>
        <authorList>
            <person name="Eichinger L."/>
            <person name="Pachebat J.A."/>
            <person name="Gloeckner G."/>
            <person name="Rajandream M.A."/>
            <person name="Sucgang R."/>
            <person name="Berriman M."/>
            <person name="Song J."/>
            <person name="Olsen R."/>
            <person name="Szafranski K."/>
            <person name="Xu Q."/>
            <person name="Tunggal B."/>
            <person name="Kummerfeld S."/>
            <person name="Madera M."/>
            <person name="Konfortov B.A."/>
            <person name="Rivero F."/>
            <person name="Bankier A.T."/>
            <person name="Lehmann R."/>
            <person name="Hamlin N."/>
            <person name="Davies R."/>
            <person name="Gaudet P."/>
            <person name="Fey P."/>
            <person name="Pilcher K."/>
            <person name="Chen G."/>
            <person name="Saunders D."/>
            <person name="Sodergren E.J."/>
            <person name="Davis P."/>
            <person name="Kerhornou A."/>
            <person name="Nie X."/>
            <person name="Hall N."/>
            <person name="Anjard C."/>
            <person name="Hemphill L."/>
            <person name="Bason N."/>
            <person name="Farbrother P."/>
            <person name="Desany B."/>
            <person name="Just E."/>
            <person name="Morio T."/>
            <person name="Rost R."/>
            <person name="Churcher C.M."/>
            <person name="Cooper J."/>
            <person name="Haydock S."/>
            <person name="van Driessche N."/>
            <person name="Cronin A."/>
            <person name="Goodhead I."/>
            <person name="Muzny D.M."/>
            <person name="Mourier T."/>
            <person name="Pain A."/>
            <person name="Lu M."/>
            <person name="Harper D."/>
            <person name="Lindsay R."/>
            <person name="Hauser H."/>
            <person name="James K.D."/>
            <person name="Quiles M."/>
            <person name="Madan Babu M."/>
            <person name="Saito T."/>
            <person name="Buchrieser C."/>
            <person name="Wardroper A."/>
            <person name="Felder M."/>
            <person name="Thangavelu M."/>
            <person name="Johnson D."/>
            <person name="Knights A."/>
            <person name="Loulseged H."/>
            <person name="Mungall K.L."/>
            <person name="Oliver K."/>
            <person name="Price C."/>
            <person name="Quail M.A."/>
            <person name="Urushihara H."/>
            <person name="Hernandez J."/>
            <person name="Rabbinowitsch E."/>
            <person name="Steffen D."/>
            <person name="Sanders M."/>
            <person name="Ma J."/>
            <person name="Kohara Y."/>
            <person name="Sharp S."/>
            <person name="Simmonds M.N."/>
            <person name="Spiegler S."/>
            <person name="Tivey A."/>
            <person name="Sugano S."/>
            <person name="White B."/>
            <person name="Walker D."/>
            <person name="Woodward J.R."/>
            <person name="Winckler T."/>
            <person name="Tanaka Y."/>
            <person name="Shaulsky G."/>
            <person name="Schleicher M."/>
            <person name="Weinstock G.M."/>
            <person name="Rosenthal A."/>
            <person name="Cox E.C."/>
            <person name="Chisholm R.L."/>
            <person name="Gibbs R.A."/>
            <person name="Loomis W.F."/>
            <person name="Platzer M."/>
            <person name="Kay R.R."/>
            <person name="Williams J.G."/>
            <person name="Dear P.H."/>
            <person name="Noegel A.A."/>
            <person name="Barrell B.G."/>
            <person name="Kuspa A."/>
        </authorList>
    </citation>
    <scope>NUCLEOTIDE SEQUENCE [LARGE SCALE GENOMIC DNA]</scope>
    <source>
        <strain>AX4</strain>
    </source>
</reference>
<keyword id="KW-1185">Reference proteome</keyword>
<keyword id="KW-0687">Ribonucleoprotein</keyword>
<keyword id="KW-0689">Ribosomal protein</keyword>
<dbReference type="EMBL" id="D50338">
    <property type="protein sequence ID" value="BAA08873.1"/>
    <property type="molecule type" value="Genomic_DNA"/>
</dbReference>
<dbReference type="EMBL" id="AAFI02000190">
    <property type="protein sequence ID" value="EAL61173.1"/>
    <property type="molecule type" value="Genomic_DNA"/>
</dbReference>
<dbReference type="PIR" id="JE0320">
    <property type="entry name" value="JE0320"/>
</dbReference>
<dbReference type="RefSeq" id="XP_629601.1">
    <property type="nucleotide sequence ID" value="XM_629599.1"/>
</dbReference>
<dbReference type="SMR" id="P48160"/>
<dbReference type="FunCoup" id="P48160">
    <property type="interactions" value="500"/>
</dbReference>
<dbReference type="STRING" id="44689.P48160"/>
<dbReference type="PaxDb" id="44689-DDB0201638"/>
<dbReference type="EnsemblProtists" id="EAL61173">
    <property type="protein sequence ID" value="EAL61173"/>
    <property type="gene ID" value="DDB_G0292388"/>
</dbReference>
<dbReference type="GeneID" id="8628661"/>
<dbReference type="KEGG" id="ddi:DDB_G0292388"/>
<dbReference type="dictyBase" id="DDB_G0292388">
    <property type="gene designation" value="rpl27a"/>
</dbReference>
<dbReference type="VEuPathDB" id="AmoebaDB:DDB_G0292388"/>
<dbReference type="eggNOG" id="KOG1742">
    <property type="taxonomic scope" value="Eukaryota"/>
</dbReference>
<dbReference type="HOGENOM" id="CLU_109163_1_0_1"/>
<dbReference type="InParanoid" id="P48160"/>
<dbReference type="OMA" id="WGRVGQH"/>
<dbReference type="PhylomeDB" id="P48160"/>
<dbReference type="Reactome" id="R-DDI-156827">
    <property type="pathway name" value="L13a-mediated translational silencing of Ceruloplasmin expression"/>
</dbReference>
<dbReference type="Reactome" id="R-DDI-1799339">
    <property type="pathway name" value="SRP-dependent cotranslational protein targeting to membrane"/>
</dbReference>
<dbReference type="Reactome" id="R-DDI-72689">
    <property type="pathway name" value="Formation of a pool of free 40S subunits"/>
</dbReference>
<dbReference type="Reactome" id="R-DDI-72706">
    <property type="pathway name" value="GTP hydrolysis and joining of the 60S ribosomal subunit"/>
</dbReference>
<dbReference type="Reactome" id="R-DDI-975956">
    <property type="pathway name" value="Nonsense Mediated Decay (NMD) independent of the Exon Junction Complex (EJC)"/>
</dbReference>
<dbReference type="Reactome" id="R-DDI-975957">
    <property type="pathway name" value="Nonsense Mediated Decay (NMD) enhanced by the Exon Junction Complex (EJC)"/>
</dbReference>
<dbReference type="PRO" id="PR:P48160"/>
<dbReference type="Proteomes" id="UP000002195">
    <property type="component" value="Chromosome 6"/>
</dbReference>
<dbReference type="GO" id="GO:0022625">
    <property type="term" value="C:cytosolic large ribosomal subunit"/>
    <property type="evidence" value="ECO:0000318"/>
    <property type="project" value="GO_Central"/>
</dbReference>
<dbReference type="GO" id="GO:0031012">
    <property type="term" value="C:extracellular matrix"/>
    <property type="evidence" value="ECO:0007005"/>
    <property type="project" value="dictyBase"/>
</dbReference>
<dbReference type="GO" id="GO:0005840">
    <property type="term" value="C:ribosome"/>
    <property type="evidence" value="ECO:0000250"/>
    <property type="project" value="dictyBase"/>
</dbReference>
<dbReference type="GO" id="GO:0003735">
    <property type="term" value="F:structural constituent of ribosome"/>
    <property type="evidence" value="ECO:0000250"/>
    <property type="project" value="dictyBase"/>
</dbReference>
<dbReference type="GO" id="GO:0006412">
    <property type="term" value="P:translation"/>
    <property type="evidence" value="ECO:0000250"/>
    <property type="project" value="dictyBase"/>
</dbReference>
<dbReference type="FunFam" id="3.100.10.10:FF:000002">
    <property type="entry name" value="60S ribosomal protein L27a"/>
    <property type="match status" value="1"/>
</dbReference>
<dbReference type="Gene3D" id="3.100.10.10">
    <property type="match status" value="1"/>
</dbReference>
<dbReference type="HAMAP" id="MF_01341">
    <property type="entry name" value="Ribosomal_uL15"/>
    <property type="match status" value="1"/>
</dbReference>
<dbReference type="InterPro" id="IPR030878">
    <property type="entry name" value="Ribosomal_uL15"/>
</dbReference>
<dbReference type="InterPro" id="IPR021131">
    <property type="entry name" value="Ribosomal_uL15/eL18"/>
</dbReference>
<dbReference type="InterPro" id="IPR036227">
    <property type="entry name" value="Ribosomal_uL15/eL18_sf"/>
</dbReference>
<dbReference type="InterPro" id="IPR001196">
    <property type="entry name" value="Ribosomal_uL15_CS"/>
</dbReference>
<dbReference type="PANTHER" id="PTHR11721">
    <property type="entry name" value="60S RIBOSOMAL PROTEIN L27A"/>
    <property type="match status" value="1"/>
</dbReference>
<dbReference type="PANTHER" id="PTHR11721:SF3">
    <property type="entry name" value="LARGE RIBOSOMAL SUBUNIT PROTEIN UL15"/>
    <property type="match status" value="1"/>
</dbReference>
<dbReference type="Pfam" id="PF00828">
    <property type="entry name" value="Ribosomal_L27A"/>
    <property type="match status" value="1"/>
</dbReference>
<dbReference type="SUPFAM" id="SSF52080">
    <property type="entry name" value="Ribosomal proteins L15p and L18e"/>
    <property type="match status" value="1"/>
</dbReference>
<dbReference type="PROSITE" id="PS00475">
    <property type="entry name" value="RIBOSOMAL_L15"/>
    <property type="match status" value="1"/>
</dbReference>
<sequence length="148" mass="16408">MPTRFSKHRKSRGDVCAGYGRVGKHRKHPGGRGNAGGLTHHRINFDKYHPGYFGKLGMRHFHLLRNQYHCPTVSLEKIWTLVPESVRKSLAAKNDGTAPVVDVTQKGFFKVLGHGILPTQPIIVKARYFSKVAEKKIKAVGGACILVA</sequence>
<comment type="similarity">
    <text evidence="2">Belongs to the universal ribosomal protein uL15 family.</text>
</comment>
<proteinExistence type="inferred from homology"/>
<gene>
    <name type="primary">rpl27a</name>
    <name type="ORF">DDB_G0292388</name>
</gene>